<comment type="function">
    <text evidence="7">Involved in trophoblast cell proliferation and differentiation probably by affecting mitotic cell cycle progression. Proteolytic activity and nuclear localization are essential for its role in cell cycle progression.</text>
</comment>
<comment type="subcellular location">
    <subcellularLocation>
        <location evidence="7 8">Endosome</location>
    </subcellularLocation>
    <subcellularLocation>
        <location evidence="7 8">Lysosome</location>
    </subcellularLocation>
    <subcellularLocation>
        <location evidence="7">Cytoplasm</location>
        <location evidence="7">Perinuclear region</location>
    </subcellularLocation>
    <subcellularLocation>
        <location evidence="7 8">Golgi apparatus</location>
    </subcellularLocation>
    <subcellularLocation>
        <location evidence="7">Nucleus</location>
    </subcellularLocation>
    <subcellularLocation>
        <location evidence="7">Secreted</location>
        <location evidence="7">Extracellular space</location>
    </subcellularLocation>
</comment>
<comment type="tissue specificity">
    <text evidence="5 6 7">Expressed in placenta. Expressed in parietal and spiral artery-associated trophoblast giant cells, most abundantly during the phase of trophoblast invasion. From 14.5 dpc onwards, expressed at lower levels in labyrinth trophoblast cells. Expressed in trophoblast stem cells. Expressed in heart, liver and testis.</text>
</comment>
<comment type="developmental stage">
    <text evidence="5 6 7">Expressed in adult but not in embryo. Expressed in the placenta from early post-implantation (5.5 dpc) onwards. After 9.5 dpc expression declines.</text>
</comment>
<comment type="similarity">
    <text evidence="3 4">Belongs to the peptidase C1 family.</text>
</comment>
<proteinExistence type="evidence at transcript level"/>
<accession>Q91ZF2</accession>
<accession>Q9JI84</accession>
<sequence length="331" mass="37725">MTPTVFLSILCLGVALAAPAPDYNLDAEWEEWKRSNDRTYSPEEEKQRRAVWEGNVKWIKQHIMENGLWMNNFTIEMNEFGDMTGEEMKMLTESSSYPLRNGKHIQKRNPKIPPTLDWRKEGYVTPVRRQGSCGACWAFSVTACIEGQLFKKTGKLIPLSVQNLMDCSVSYGTKGCDGGRPYDAFQYVKNNGGLEAEATYPYEAKAKHCRYRPERSVVKVNRFFVVPRNEEALLQALVTHGPIAVAIDGSHASFHSYRGGIYHEPKCRKDTLDHGLLLVGYGYEGHESENRKYWLLKNSHGERWGENGYMKLPRGQNNYCGIASYAMYPAL</sequence>
<feature type="signal peptide" evidence="2 12">
    <location>
        <begin position="1"/>
        <end position="17"/>
    </location>
</feature>
<feature type="propeptide" id="PRO_0000415396" description="Activation peptide" evidence="1">
    <location>
        <begin position="18"/>
        <end position="111"/>
    </location>
</feature>
<feature type="chain" id="PRO_5000088249" description="Cathepsin 7" evidence="1">
    <location>
        <begin position="112"/>
        <end position="331"/>
    </location>
</feature>
<feature type="short sequence motif" description="Nuclear localization signal" evidence="7">
    <location>
        <begin position="33"/>
        <end position="50"/>
    </location>
</feature>
<feature type="active site" evidence="1">
    <location>
        <position position="136"/>
    </location>
</feature>
<feature type="active site" evidence="1">
    <location>
        <position position="274"/>
    </location>
</feature>
<feature type="active site" evidence="1">
    <location>
        <position position="298"/>
    </location>
</feature>
<feature type="glycosylation site" description="N-linked (GlcNAc...) asparagine" evidence="2">
    <location>
        <position position="72"/>
    </location>
</feature>
<feature type="disulfide bond" evidence="1">
    <location>
        <begin position="133"/>
        <end position="176"/>
    </location>
</feature>
<feature type="disulfide bond" evidence="1">
    <location>
        <begin position="167"/>
        <end position="209"/>
    </location>
</feature>
<feature type="disulfide bond" evidence="1">
    <location>
        <begin position="267"/>
        <end position="320"/>
    </location>
</feature>
<feature type="sequence conflict" description="In Ref. 5; AAF81274." evidence="9" ref="5">
    <original>P</original>
    <variation>L</variation>
    <location>
        <position position="329"/>
    </location>
</feature>
<keyword id="KW-0131">Cell cycle</keyword>
<keyword id="KW-0132">Cell division</keyword>
<keyword id="KW-0963">Cytoplasm</keyword>
<keyword id="KW-1015">Disulfide bond</keyword>
<keyword id="KW-0967">Endosome</keyword>
<keyword id="KW-0325">Glycoprotein</keyword>
<keyword id="KW-0333">Golgi apparatus</keyword>
<keyword id="KW-0378">Hydrolase</keyword>
<keyword id="KW-0458">Lysosome</keyword>
<keyword id="KW-0498">Mitosis</keyword>
<keyword id="KW-0539">Nucleus</keyword>
<keyword id="KW-0645">Protease</keyword>
<keyword id="KW-1185">Reference proteome</keyword>
<keyword id="KW-0964">Secreted</keyword>
<keyword id="KW-0732">Signal</keyword>
<keyword id="KW-0788">Thiol protease</keyword>
<keyword id="KW-0865">Zymogen</keyword>
<gene>
    <name evidence="11 14" type="primary">Cts7</name>
    <name evidence="12" type="synonym">Cts1</name>
    <name evidence="10" type="synonym">Epcs24</name>
</gene>
<evidence type="ECO:0000250" key="1">
    <source>
        <dbReference type="UniProtKB" id="O60911"/>
    </source>
</evidence>
<evidence type="ECO:0000255" key="2"/>
<evidence type="ECO:0000255" key="3">
    <source>
        <dbReference type="PROSITE-ProRule" id="PRU10088"/>
    </source>
</evidence>
<evidence type="ECO:0000255" key="4">
    <source>
        <dbReference type="PROSITE-ProRule" id="PRU10089"/>
    </source>
</evidence>
<evidence type="ECO:0000269" key="5">
    <source>
    </source>
</evidence>
<evidence type="ECO:0000269" key="6">
    <source>
    </source>
</evidence>
<evidence type="ECO:0000269" key="7">
    <source>
    </source>
</evidence>
<evidence type="ECO:0000305" key="8"/>
<evidence type="ECO:0000305" key="9">
    <source>
    </source>
</evidence>
<evidence type="ECO:0000312" key="10">
    <source>
        <dbReference type="EMBL" id="AAF81274.1"/>
    </source>
</evidence>
<evidence type="ECO:0000312" key="11">
    <source>
        <dbReference type="EMBL" id="AAH64740.1"/>
    </source>
</evidence>
<evidence type="ECO:0000312" key="12">
    <source>
        <dbReference type="EMBL" id="AAK00508.1"/>
    </source>
</evidence>
<evidence type="ECO:0000312" key="13">
    <source>
        <dbReference type="EMBL" id="EDL41318.1"/>
    </source>
</evidence>
<evidence type="ECO:0000312" key="14">
    <source>
        <dbReference type="MGI" id="MGI:1860262"/>
    </source>
</evidence>
<name>CAT7_MOUSE</name>
<protein>
    <recommendedName>
        <fullName evidence="11">Cathepsin 7</fullName>
        <ecNumber>3.4.22.-</ecNumber>
    </recommendedName>
    <alternativeName>
        <fullName evidence="12">Cathepsin 1</fullName>
    </alternativeName>
</protein>
<organism>
    <name type="scientific">Mus musculus</name>
    <name type="common">Mouse</name>
    <dbReference type="NCBI Taxonomy" id="10090"/>
    <lineage>
        <taxon>Eukaryota</taxon>
        <taxon>Metazoa</taxon>
        <taxon>Chordata</taxon>
        <taxon>Craniata</taxon>
        <taxon>Vertebrata</taxon>
        <taxon>Euteleostomi</taxon>
        <taxon>Mammalia</taxon>
        <taxon>Eutheria</taxon>
        <taxon>Euarchontoglires</taxon>
        <taxon>Glires</taxon>
        <taxon>Rodentia</taxon>
        <taxon>Myomorpha</taxon>
        <taxon>Muroidea</taxon>
        <taxon>Muridae</taxon>
        <taxon>Murinae</taxon>
        <taxon>Mus</taxon>
        <taxon>Mus</taxon>
    </lineage>
</organism>
<dbReference type="EC" id="3.4.22.-"/>
<dbReference type="EMBL" id="AY014779">
    <property type="protein sequence ID" value="AAK00508.1"/>
    <property type="molecule type" value="mRNA"/>
</dbReference>
<dbReference type="EMBL" id="CT030645">
    <property type="status" value="NOT_ANNOTATED_CDS"/>
    <property type="molecule type" value="Genomic_DNA"/>
</dbReference>
<dbReference type="EMBL" id="CH466546">
    <property type="protein sequence ID" value="EDL41318.1"/>
    <property type="molecule type" value="Genomic_DNA"/>
</dbReference>
<dbReference type="EMBL" id="BC064740">
    <property type="protein sequence ID" value="AAH64740.1"/>
    <property type="molecule type" value="mRNA"/>
</dbReference>
<dbReference type="EMBL" id="AF250837">
    <property type="protein sequence ID" value="AAF81274.1"/>
    <property type="molecule type" value="mRNA"/>
</dbReference>
<dbReference type="CCDS" id="CCDS26588.1"/>
<dbReference type="RefSeq" id="NP_001346316.1">
    <property type="nucleotide sequence ID" value="NM_001359387.1"/>
</dbReference>
<dbReference type="RefSeq" id="NP_062412.1">
    <property type="nucleotide sequence ID" value="NM_019539.4"/>
</dbReference>
<dbReference type="RefSeq" id="XP_006517360.1">
    <property type="nucleotide sequence ID" value="XM_006517297.1"/>
</dbReference>
<dbReference type="SMR" id="Q91ZF2"/>
<dbReference type="FunCoup" id="Q91ZF2">
    <property type="interactions" value="38"/>
</dbReference>
<dbReference type="STRING" id="10090.ENSMUSP00000021892"/>
<dbReference type="MEROPS" id="C01.016"/>
<dbReference type="GlyCosmos" id="Q91ZF2">
    <property type="glycosylation" value="1 site, No reported glycans"/>
</dbReference>
<dbReference type="GlyGen" id="Q91ZF2">
    <property type="glycosylation" value="1 site"/>
</dbReference>
<dbReference type="PaxDb" id="10090-ENSMUSP00000021892"/>
<dbReference type="DNASU" id="56092"/>
<dbReference type="Ensembl" id="ENSMUST00000021892.7">
    <property type="protein sequence ID" value="ENSMUSP00000021892.6"/>
    <property type="gene ID" value="ENSMUSG00000021440.8"/>
</dbReference>
<dbReference type="Ensembl" id="ENSMUST00000224986.2">
    <property type="protein sequence ID" value="ENSMUSP00000153603.2"/>
    <property type="gene ID" value="ENSMUSG00000021440.8"/>
</dbReference>
<dbReference type="GeneID" id="56092"/>
<dbReference type="KEGG" id="mmu:56092"/>
<dbReference type="UCSC" id="uc007qwi.1">
    <property type="organism name" value="mouse"/>
</dbReference>
<dbReference type="AGR" id="MGI:1860262"/>
<dbReference type="CTD" id="56092"/>
<dbReference type="MGI" id="MGI:1860262">
    <property type="gene designation" value="Cts7"/>
</dbReference>
<dbReference type="VEuPathDB" id="HostDB:ENSMUSG00000021440"/>
<dbReference type="eggNOG" id="KOG1543">
    <property type="taxonomic scope" value="Eukaryota"/>
</dbReference>
<dbReference type="GeneTree" id="ENSGT00940000153321"/>
<dbReference type="HOGENOM" id="CLU_012184_1_2_1"/>
<dbReference type="InParanoid" id="Q91ZF2"/>
<dbReference type="OMA" id="DNMAEIV"/>
<dbReference type="OrthoDB" id="190265at2759"/>
<dbReference type="PhylomeDB" id="Q91ZF2"/>
<dbReference type="TreeFam" id="TF313739"/>
<dbReference type="BioGRID-ORCS" id="56092">
    <property type="hits" value="1 hit in 78 CRISPR screens"/>
</dbReference>
<dbReference type="PRO" id="PR:Q91ZF2"/>
<dbReference type="Proteomes" id="UP000000589">
    <property type="component" value="Chromosome 13"/>
</dbReference>
<dbReference type="RNAct" id="Q91ZF2">
    <property type="molecule type" value="protein"/>
</dbReference>
<dbReference type="Bgee" id="ENSMUSG00000021440">
    <property type="expression patterns" value="Expressed in ectoplacental cone and 14 other cell types or tissues"/>
</dbReference>
<dbReference type="ExpressionAtlas" id="Q91ZF2">
    <property type="expression patterns" value="baseline and differential"/>
</dbReference>
<dbReference type="GO" id="GO:0005768">
    <property type="term" value="C:endosome"/>
    <property type="evidence" value="ECO:0000314"/>
    <property type="project" value="MGI"/>
</dbReference>
<dbReference type="GO" id="GO:0005576">
    <property type="term" value="C:extracellular region"/>
    <property type="evidence" value="ECO:0000314"/>
    <property type="project" value="MGI"/>
</dbReference>
<dbReference type="GO" id="GO:0005794">
    <property type="term" value="C:Golgi apparatus"/>
    <property type="evidence" value="ECO:0000314"/>
    <property type="project" value="MGI"/>
</dbReference>
<dbReference type="GO" id="GO:0005764">
    <property type="term" value="C:lysosome"/>
    <property type="evidence" value="ECO:0000314"/>
    <property type="project" value="MGI"/>
</dbReference>
<dbReference type="GO" id="GO:0005634">
    <property type="term" value="C:nucleus"/>
    <property type="evidence" value="ECO:0000314"/>
    <property type="project" value="MGI"/>
</dbReference>
<dbReference type="GO" id="GO:0048471">
    <property type="term" value="C:perinuclear region of cytoplasm"/>
    <property type="evidence" value="ECO:0007669"/>
    <property type="project" value="UniProtKB-SubCell"/>
</dbReference>
<dbReference type="GO" id="GO:0008234">
    <property type="term" value="F:cysteine-type peptidase activity"/>
    <property type="evidence" value="ECO:0007669"/>
    <property type="project" value="UniProtKB-KW"/>
</dbReference>
<dbReference type="GO" id="GO:0008233">
    <property type="term" value="F:peptidase activity"/>
    <property type="evidence" value="ECO:0000247"/>
    <property type="project" value="MGI"/>
</dbReference>
<dbReference type="GO" id="GO:0051301">
    <property type="term" value="P:cell division"/>
    <property type="evidence" value="ECO:0007669"/>
    <property type="project" value="UniProtKB-KW"/>
</dbReference>
<dbReference type="GO" id="GO:0000278">
    <property type="term" value="P:mitotic cell cycle"/>
    <property type="evidence" value="ECO:0000315"/>
    <property type="project" value="MGI"/>
</dbReference>
<dbReference type="GO" id="GO:0045930">
    <property type="term" value="P:negative regulation of mitotic cell cycle"/>
    <property type="evidence" value="ECO:0000315"/>
    <property type="project" value="MGI"/>
</dbReference>
<dbReference type="GO" id="GO:0006508">
    <property type="term" value="P:proteolysis"/>
    <property type="evidence" value="ECO:0000247"/>
    <property type="project" value="MGI"/>
</dbReference>
<dbReference type="GO" id="GO:0060707">
    <property type="term" value="P:trophoblast giant cell differentiation"/>
    <property type="evidence" value="ECO:0000315"/>
    <property type="project" value="MGI"/>
</dbReference>
<dbReference type="CDD" id="cd02248">
    <property type="entry name" value="Peptidase_C1A"/>
    <property type="match status" value="1"/>
</dbReference>
<dbReference type="FunFam" id="3.90.70.10:FF:000338">
    <property type="entry name" value="Cathepsin 7"/>
    <property type="match status" value="1"/>
</dbReference>
<dbReference type="Gene3D" id="3.90.70.10">
    <property type="entry name" value="Cysteine proteinases"/>
    <property type="match status" value="1"/>
</dbReference>
<dbReference type="InterPro" id="IPR038765">
    <property type="entry name" value="Papain-like_cys_pep_sf"/>
</dbReference>
<dbReference type="InterPro" id="IPR000169">
    <property type="entry name" value="Pept_cys_AS"/>
</dbReference>
<dbReference type="InterPro" id="IPR025660">
    <property type="entry name" value="Pept_his_AS"/>
</dbReference>
<dbReference type="InterPro" id="IPR013128">
    <property type="entry name" value="Peptidase_C1A"/>
</dbReference>
<dbReference type="InterPro" id="IPR000668">
    <property type="entry name" value="Peptidase_C1A_C"/>
</dbReference>
<dbReference type="InterPro" id="IPR039417">
    <property type="entry name" value="Peptidase_C1A_papain-like"/>
</dbReference>
<dbReference type="InterPro" id="IPR013201">
    <property type="entry name" value="Prot_inhib_I29"/>
</dbReference>
<dbReference type="PANTHER" id="PTHR12411">
    <property type="entry name" value="CYSTEINE PROTEASE FAMILY C1-RELATED"/>
    <property type="match status" value="1"/>
</dbReference>
<dbReference type="Pfam" id="PF08246">
    <property type="entry name" value="Inhibitor_I29"/>
    <property type="match status" value="1"/>
</dbReference>
<dbReference type="Pfam" id="PF00112">
    <property type="entry name" value="Peptidase_C1"/>
    <property type="match status" value="1"/>
</dbReference>
<dbReference type="PRINTS" id="PR00705">
    <property type="entry name" value="PAPAIN"/>
</dbReference>
<dbReference type="SMART" id="SM00848">
    <property type="entry name" value="Inhibitor_I29"/>
    <property type="match status" value="1"/>
</dbReference>
<dbReference type="SMART" id="SM00645">
    <property type="entry name" value="Pept_C1"/>
    <property type="match status" value="1"/>
</dbReference>
<dbReference type="SUPFAM" id="SSF54001">
    <property type="entry name" value="Cysteine proteinases"/>
    <property type="match status" value="1"/>
</dbReference>
<dbReference type="PROSITE" id="PS00139">
    <property type="entry name" value="THIOL_PROTEASE_CYS"/>
    <property type="match status" value="1"/>
</dbReference>
<dbReference type="PROSITE" id="PS00639">
    <property type="entry name" value="THIOL_PROTEASE_HIS"/>
    <property type="match status" value="1"/>
</dbReference>
<reference evidence="8 12" key="1">
    <citation type="journal article" date="2002" name="Genomics">
        <title>Identification and characterization of a dense cluster of placenta-specific cysteine peptidase genes and related genes on mouse chromosome 13.</title>
        <authorList>
            <person name="Deussing J."/>
            <person name="Kouadio M."/>
            <person name="Rehman S."/>
            <person name="Werber I."/>
            <person name="Schwinde A."/>
            <person name="Peters C."/>
        </authorList>
    </citation>
    <scope>NUCLEOTIDE SEQUENCE [MRNA]</scope>
    <scope>TISSUE SPECIFICITY</scope>
    <scope>DEVELOPMENTAL STAGE</scope>
    <source>
        <strain evidence="12">C57BL/6J</strain>
        <tissue evidence="12">Placenta</tissue>
    </source>
</reference>
<reference key="2">
    <citation type="journal article" date="2009" name="PLoS Biol.">
        <title>Lineage-specific biology revealed by a finished genome assembly of the mouse.</title>
        <authorList>
            <person name="Church D.M."/>
            <person name="Goodstadt L."/>
            <person name="Hillier L.W."/>
            <person name="Zody M.C."/>
            <person name="Goldstein S."/>
            <person name="She X."/>
            <person name="Bult C.J."/>
            <person name="Agarwala R."/>
            <person name="Cherry J.L."/>
            <person name="DiCuccio M."/>
            <person name="Hlavina W."/>
            <person name="Kapustin Y."/>
            <person name="Meric P."/>
            <person name="Maglott D."/>
            <person name="Birtle Z."/>
            <person name="Marques A.C."/>
            <person name="Graves T."/>
            <person name="Zhou S."/>
            <person name="Teague B."/>
            <person name="Potamousis K."/>
            <person name="Churas C."/>
            <person name="Place M."/>
            <person name="Herschleb J."/>
            <person name="Runnheim R."/>
            <person name="Forrest D."/>
            <person name="Amos-Landgraf J."/>
            <person name="Schwartz D.C."/>
            <person name="Cheng Z."/>
            <person name="Lindblad-Toh K."/>
            <person name="Eichler E.E."/>
            <person name="Ponting C.P."/>
        </authorList>
    </citation>
    <scope>NUCLEOTIDE SEQUENCE [LARGE SCALE GENOMIC DNA]</scope>
    <source>
        <strain>C57BL/6J</strain>
    </source>
</reference>
<reference evidence="13" key="3">
    <citation type="submission" date="2005-07" db="EMBL/GenBank/DDBJ databases">
        <authorList>
            <person name="Mural R.J."/>
            <person name="Adams M.D."/>
            <person name="Myers E.W."/>
            <person name="Smith H.O."/>
            <person name="Venter J.C."/>
        </authorList>
    </citation>
    <scope>NUCLEOTIDE SEQUENCE [LARGE SCALE GENOMIC DNA]</scope>
</reference>
<reference evidence="11" key="4">
    <citation type="journal article" date="2004" name="Genome Res.">
        <title>The status, quality, and expansion of the NIH full-length cDNA project: the Mammalian Gene Collection (MGC).</title>
        <authorList>
            <consortium name="The MGC Project Team"/>
        </authorList>
    </citation>
    <scope>NUCLEOTIDE SEQUENCE [LARGE SCALE MRNA]</scope>
    <source>
        <strain evidence="11">C57BL/6J</strain>
        <tissue evidence="11">Embryo</tissue>
    </source>
</reference>
<reference evidence="8 10" key="5">
    <citation type="journal article" date="2000" name="Dev. Biol.">
        <title>cDNA subtraction cloning reveals novel genes whose temporal and spatial expression indicates association with trophoblast invasion.</title>
        <authorList>
            <person name="Hemberger M."/>
            <person name="Himmelbauer H."/>
            <person name="Ruschmann J."/>
            <person name="Zeitz C."/>
            <person name="Fundele R."/>
        </authorList>
    </citation>
    <scope>NUCLEOTIDE SEQUENCE [MRNA] OF 1-329</scope>
    <scope>TISSUE SPECIFICITY</scope>
    <scope>DEVELOPMENTAL STAGE</scope>
    <source>
        <strain evidence="5">C57BL/6J</strain>
        <tissue evidence="5">Placenta</tissue>
    </source>
</reference>
<reference evidence="8" key="6">
    <citation type="journal article" date="2008" name="Development">
        <title>Cathepsin proteases have distinct roles in trophoblast function and vascular remodelling.</title>
        <authorList>
            <person name="Screen M."/>
            <person name="Dean W."/>
            <person name="Cross J.C."/>
            <person name="Hemberger M."/>
        </authorList>
    </citation>
    <scope>FUNCTION</scope>
    <scope>SUBCELLULAR LOCATION</scope>
    <scope>TISSUE SPECIFICITY</scope>
    <scope>DEVELOPMENTAL STAGE</scope>
    <scope>NUCLEAR LOCALIZATION SIGNAL</scope>
</reference>